<keyword id="KW-0002">3D-structure</keyword>
<keyword id="KW-1072">Activation of host autophagy by virus</keyword>
<keyword id="KW-1015">Disulfide bond</keyword>
<keyword id="KW-1035">Host cytoplasm</keyword>
<keyword id="KW-1043">Host membrane</keyword>
<keyword id="KW-0945">Host-virus interaction</keyword>
<keyword id="KW-0378">Hydrolase</keyword>
<keyword id="KW-1090">Inhibition of host innate immune response by virus</keyword>
<keyword id="KW-1092">Inhibition of host IRF3 by virus</keyword>
<keyword id="KW-1113">Inhibition of host RLR pathway by virus</keyword>
<keyword id="KW-0472">Membrane</keyword>
<keyword id="KW-0479">Metal-binding</keyword>
<keyword id="KW-1127">Modulation of host ubiquitin pathway by viral deubiquitinase</keyword>
<keyword id="KW-1130">Modulation of host ubiquitin pathway by virus</keyword>
<keyword id="KW-0645">Protease</keyword>
<keyword id="KW-1185">Reference proteome</keyword>
<keyword id="KW-0677">Repeat</keyword>
<keyword id="KW-0688">Ribosomal frameshifting</keyword>
<keyword id="KW-0694">RNA-binding</keyword>
<keyword id="KW-0788">Thiol protease</keyword>
<keyword id="KW-0812">Transmembrane</keyword>
<keyword id="KW-1133">Transmembrane helix</keyword>
<keyword id="KW-0833">Ubl conjugation pathway</keyword>
<keyword id="KW-0899">Viral immunoevasion</keyword>
<keyword id="KW-0862">Zinc</keyword>
<keyword id="KW-0863">Zinc-finger</keyword>
<organismHost>
    <name type="scientific">Homo sapiens</name>
    <name type="common">Human</name>
    <dbReference type="NCBI Taxonomy" id="9606"/>
</organismHost>
<protein>
    <recommendedName>
        <fullName>Replicase polyprotein 1a</fullName>
        <shortName>pp1a</shortName>
    </recommendedName>
    <alternativeName>
        <fullName>ORF1a polyprotein</fullName>
    </alternativeName>
    <component>
        <recommendedName>
            <fullName>Non-structural protein 1</fullName>
            <shortName>nsp1</shortName>
        </recommendedName>
        <alternativeName>
            <fullName>p9</fullName>
        </alternativeName>
    </component>
    <component>
        <recommendedName>
            <fullName>Non-structural protein 2</fullName>
            <shortName>nsp2</shortName>
        </recommendedName>
        <alternativeName>
            <fullName>p87</fullName>
        </alternativeName>
    </component>
    <component>
        <recommendedName>
            <fullName>Non-structural protein 3</fullName>
            <shortName>nsp3</shortName>
            <ecNumber>3.4.19.12</ecNumber>
            <ecNumber>3.4.22.-</ecNumber>
        </recommendedName>
        <alternativeName>
            <fullName>PL1-PRO/PL2-PRO</fullName>
        </alternativeName>
        <alternativeName>
            <fullName>PLP1/PLP2</fullName>
        </alternativeName>
        <alternativeName>
            <fullName>Papain-like proteinases 1/2</fullName>
        </alternativeName>
        <alternativeName>
            <fullName>p195</fullName>
        </alternativeName>
    </component>
    <component>
        <recommendedName>
            <fullName>Non-structural protein 4</fullName>
            <shortName>nsp4</shortName>
        </recommendedName>
        <alternativeName>
            <fullName>Peptide HD2</fullName>
        </alternativeName>
    </component>
    <component>
        <recommendedName>
            <fullName>3C-like proteinase</fullName>
            <shortName>3CL-PRO</shortName>
            <shortName>3CLp</shortName>
            <ecNumber>3.4.22.-</ecNumber>
        </recommendedName>
        <alternativeName>
            <fullName>M-PRO</fullName>
        </alternativeName>
        <alternativeName>
            <fullName>nsp5</fullName>
        </alternativeName>
        <alternativeName>
            <fullName>p34</fullName>
        </alternativeName>
    </component>
    <component>
        <recommendedName>
            <fullName>Non-structural protein 6</fullName>
            <shortName>nsp6</shortName>
        </recommendedName>
    </component>
    <component>
        <recommendedName>
            <fullName>Non-structural protein 7</fullName>
            <shortName>nsp7</shortName>
        </recommendedName>
        <alternativeName>
            <fullName>p5</fullName>
        </alternativeName>
    </component>
    <component>
        <recommendedName>
            <fullName>Non-structural protein 8</fullName>
            <shortName>nsp8</shortName>
        </recommendedName>
        <alternativeName>
            <fullName>p23</fullName>
        </alternativeName>
    </component>
    <component>
        <recommendedName>
            <fullName>Non-structural protein 9</fullName>
            <shortName>nsp9</shortName>
        </recommendedName>
        <alternativeName>
            <fullName>p12</fullName>
        </alternativeName>
    </component>
    <component>
        <recommendedName>
            <fullName>Non-structural protein 10</fullName>
            <shortName>nsp10</shortName>
        </recommendedName>
        <alternativeName>
            <fullName>Growth factor-like peptide</fullName>
            <shortName>GFL</shortName>
        </alternativeName>
        <alternativeName>
            <fullName>p14</fullName>
        </alternativeName>
    </component>
    <component>
        <recommendedName>
            <fullName>Non-structural protein 11</fullName>
            <shortName>nsp11</shortName>
        </recommendedName>
    </component>
</protein>
<name>R1A_CVHNL</name>
<sequence>MFYNQVTLAVASDSEISGFGFAIPSVAVRTYSEAAAQGFQACRFVAFGLQDCVTGINDDDYVIALTGTNQLCAKILPFSDRPLNLRGWLIFSNSNYVLQDFDVVFGHGAGSVVFVDKYMCGFDGKPVLPKNMWEFRDYFNNNTDSIVIGGVTYQLAWDVIRKDLSYEQQNVLAIESIHYLGTTGHTLKSGCKLTNAKPPKYSSKVVLSGEWNAVYRAFGSPFITNGMSLLDIIVKPVFFNAFVKCNCGSESWSVGAWDGYLSSCCGTPAKKLCVVPGNVVPGDVIITSTSAGCGVKYYAGLVVKHITNITGVSLWRVTAVHSDGMFVASSSYDALLHRNSLDPFCFDVNTLLSNQLRLAFLGASVTEDVKFAASTGVIDISAGMFGLYDDILTNNKPWFVRKASGLFDAIWDAFVAAIKLVPTTTGVLVRFVKSIASTVLTVSNGVIIMCADVPDAFQSVYRTFTQAICAAFDFSLDVFKIGDVKFKRLGDYVLTENALVRLTTEVVRGVRDARIKKAMFTKVVVGPTTEVKFSVIELATVNLRLVDCAPVVCPKGKIVVIAGQAFFYSGGFYRFMVDPTTVLNDPVFTGDLFYTIKFSGFKLDGFNHQFVTASSATDAIIAVELLLLDFKTAVFVYTCVVDGCSVIVRRDATFATHVCFKDCYNVWEQFCIDNCGEPWFLTDYNAILQSNNPQCAIVQASESKVLLERFLPKCPEILLSIDDGHLWNLFVEKFNFVTDWLKTLKLTLTSNGLLGNCAKRFRRVLVKLLDVYNGFLETVCSVAYTAGVCIKYYAVNVPYVVISGFVSRVIRRERCDMTFPCVSCVTFFYEFLDTCFGVSKPNAIDVEHLELKETVFVEPKDGGQFFVSGDYLWYVVDDIYYPASCNGVLPVAFTKLAGGKISFSDDVIVHDVEPTHKVKLIFEFEDDVVTSLCKKSFGKSIIYTGDWEGLHEVLTSAMNVIGQHIKLPQFYIYDEEGGYDVSKPVMISQWPISNDSNGCVVEASTDFHQLECIVDDSVREEVDIIEQPFEEVEHVLSIKQPFSFSFRDELGVRVLDQSDNNCWISTTLVQLQLTKLLDDSIEMQLFKVGKVDSIVQKCYELSHLISGSLGDSGKLLSELLKEKYTCSITFEMSCDCGKKFDDQVGCLFWIMPYTKLFQKGECCICHKMQTYKLVSMKGTGVFVQDPAPIDIDAFPVKPICSSVYLGVKGSGHYQTNLYSFNKAIDGFGVFDIKNSSVNTVCFVDVDFHSVEIEAGEVKPFAVYKNVKFYLGDISHLVNCVSFDFVVNAANENLLHGGGVARAIDILTEGQLQSLSKDYISSNGPLKVGAGVMLECEKFNVFNVVGPRTGKHEHSLLVEAYNSILFENGIPLMPLLSCGIFGVRIENSLKALFSCDINKPLQVFVYSSNEEQAVLKFLDGLDLTPVIDDVDVVKPFRVEGNFSFFDCGVNALDGDIYLLFTNSILMLDKQGQLLDTKLNGILQQAALDYLATVKTVPAGNLVKLFVESCTIYMCVVPSINDLSFDKNLGRCVRKLNRLKTCVIANVPAIDVLKKLLSSLTLTVKFVVESNVMDVNDCFKNDNVVLKITEDGINVKDVVVESSKSLGKQLGVVSDGVDSFEGVLPINTDTVLSVAPEVDWVAFYGFEKAALFASLDVKPYGYPNDFVGGFRVLGTTDNNCWVNATCIILQYLKPTFKSKGLNVLWNKFVTGDVGPFVSFIYFITMSSKGQKGDAEEALSKLSEYLISDSIVTLEQYSTCDICKSTVVEVKSAIVCASVLKDGCDVGFCPHRHKLRSRVKFVNGRVVITNVGEPIISQPSKLLNGIAYTTFSGSFDNGHYVVYDAANNAVYDGARLFSSDLSTLAVTAIVVVGGCVTSNVPTIVSEKISVMDKLDTGAQKFFQFGDFVMNNIVLFLTWLLSMFSLLRTSIMKHDIKVIAKAPKRTGVILTRSFKYNIRSALFVIKQKWCVIVTLFKFLLLLYAIYALVFMIVQFSPFNSLLCGDIVSGYEKSTFNKDIYCGNSMVCKMCLFSYQEFNDLDHTSLVWKHIRDPILISLQPFVILVILLIFGNMYLRFGLLYFVAQFISTFGSFLGFHQKQWFLHFVPFDVLCNEFLATFIVCKIVLFVRHIIVGCNNADCVACSKSARLKRVPLQTIINGMHKSFYVNANGGTCFCNKHNFFCVNCDSFGPGNTFINGDIARELGNVVKTAVQPTAPAYVIIDKVDFVNGFYRLYSGDTFWRYDFDITESKYSCKEVLKNCNVLENFIVYNNSGSNITQIKNACVYFSQLLCEPIKLVNSELLSTLSVDFNGVLHKAYVDVLCNSFFKELTANMSMAECKATLGLTVSDDDFVSAVANAHRYDVLLSDLSFNNFFISYAKPEDKLSVYDIACCMRAGSKVVNHNVLIKESIPIVWGVKDFNTLSQEGKKYLVKTTKAKGLTFLLTFNDNQAITQVPATSIVAKQGAGFKRTYNFLWYVCLFVVALFIGVSFIDYTTTVTSFHGYDFKYIENGQLKVFEAPLHCVRNVFDNFNQWHEAKFGVVTTNSDKCPIVVGVSERINVVPGVPTNVYLVGKTLVFTLQAAFGNTGVCYDFDGVTTSDKCIFNSACTRLEGLGGDNVYCYNTDLIEGSKPYSTLQPNAYYKYDAKNYVRFPEILARGFGLRTIRTLATRYCRVGECRDSHKGVCFGFDKWYVNDGRVDDGYICGDGLIDLLVNVLSIFSSSFSVVAMSGHMLFNFLFAAFITFLCFLVTKFKRVFGDLSYGVFTVVCATLINNISYVVTQNLFFMLLYAILYFVFTRTVRYAWIWHIAYIVAYFLLIPWWLLTWFSFAAFLELLPNVFKLKISTQLFEGDKFIGTFESAAAGTFVLDMRSYERLINTISPEKLKNYAASYNKYKYYSGSASEADYRCACYAHLAKAMLDYAKDHNDMLYSPPTISYNSTLQSGLKKMAQPSGCVERCVVRVCYGSTVLNGVWLGDTVTCPRHVIAPSTTVLIDYDHAYSTMRLHNFSVSHNGVFLGVVGVTMHGSVLRIKVSQSNVHTPKHVFKTLKPGDSFNILACYEGIASGVFGVNLRTNFTIKGSFINGACGSPGYNVRNDGTVEFCYLHQIELGSGAHVGSDFTGSVYGNFDDQPSLQVESANLMLSDNVVAFLYAALLNGCRWWLCSTRVNVDGFNEWAMANGYTSVSSVECYSILAAKTGVSVEQLLASIQHLHEGFGGKNILGYSSLCDEFTLAEVVKQMYGVNLQSGKVIFGLKTMFLFSVFFTMFWAELFIYTNTIWINPVILTPIFCLLLFLSLVLTMFLKHKFLFLQVFLLPTVIATALYNCVLDYYIVKFLADHFNYNVSVLQMDVQGLVNVLVCLFVVFLHTWRFSKERFTHWFTYVCSLIAVAYTYFYSGDFLSLLVMFLCAISSDWYIGAIVFRLSRLIVFFSPESVFSVFGDVKLTLVVYLICGYLVCTYWGILYWFNRFFKCTMGVYDFKVSAAEFKYMVANGLHAPHGPFDALWLSFKLLGIGGDRCIKISTVQSKLTDLKCTNVVLLGCLSSMNIAANSSEWAYCVDLHNKINLCDDPEKAQSMLLALLAFFLSKHSDFGLDGLIDSYFDNSSTLQSVASSFVSMPSYIAYENARQAYEDAIANGSSSQLIKQLKRAMNIAKSEFDHEISVQKKINRMAEQAATQMYKEARSVNRKSKVISAMHSLLFGMLRRLDMSSVETVLNLARDGVVPLSVIPATSASKLTIVSPDLESYSKIVCDGSVHYAGVVWTLNDVKDNDGRPVHVKEITKENVETLTWPLILNCERVVKLQNNEIMPGKLKQKPMKAEGDGGVLGDGNALYNTEGGKTFMYAYISNKADLKFVKWEYEGGCNTIELDSPCRFMVETPNGPQVKYLYFVKNLNTLRRGAVLGFIGATIRLQAGKQTELAVNSGLLTACAFSVDPATTYLEAVKHGAKPVSNCIKMLSNGAGNGQAITTSVDANTNQDSYGGASICLYCRAHVPHPSMDGYCKFKGKCVQVPIGCLDPIRFCLENNVCNVCGCWLGHGCACDRTTIQSVDISYLNEQGVLVQLD</sequence>
<dbReference type="EC" id="3.4.19.12"/>
<dbReference type="EC" id="3.4.22.-"/>
<dbReference type="EMBL" id="AY567487">
    <property type="status" value="NOT_ANNOTATED_CDS"/>
    <property type="molecule type" value="Genomic_RNA"/>
</dbReference>
<dbReference type="PDB" id="2VRI">
    <property type="method" value="X-ray"/>
    <property type="resolution" value="1.80 A"/>
    <property type="chains" value="A=1258-1421"/>
</dbReference>
<dbReference type="PDB" id="3TLO">
    <property type="method" value="X-ray"/>
    <property type="resolution" value="1.60 A"/>
    <property type="chains" value="A/B=2940-3242"/>
</dbReference>
<dbReference type="PDB" id="5GWY">
    <property type="method" value="X-ray"/>
    <property type="resolution" value="2.85 A"/>
    <property type="chains" value="A/B=2940-3242"/>
</dbReference>
<dbReference type="PDB" id="7E6L">
    <property type="method" value="X-ray"/>
    <property type="resolution" value="1.78 A"/>
    <property type="chains" value="A/B=2940-3242"/>
</dbReference>
<dbReference type="PDB" id="7E6M">
    <property type="method" value="X-ray"/>
    <property type="resolution" value="1.83 A"/>
    <property type="chains" value="A/B=2940-3242"/>
</dbReference>
<dbReference type="PDB" id="7E6N">
    <property type="method" value="X-ray"/>
    <property type="resolution" value="1.84 A"/>
    <property type="chains" value="A/B=2940-3242"/>
</dbReference>
<dbReference type="PDB" id="7E6R">
    <property type="method" value="X-ray"/>
    <property type="resolution" value="1.90 A"/>
    <property type="chains" value="A/B=2940-3242"/>
</dbReference>
<dbReference type="PDB" id="7EO7">
    <property type="method" value="X-ray"/>
    <property type="resolution" value="2.25 A"/>
    <property type="chains" value="A/B=2940-3242"/>
</dbReference>
<dbReference type="PDBsum" id="2VRI"/>
<dbReference type="PDBsum" id="3TLO"/>
<dbReference type="PDBsum" id="5GWY"/>
<dbReference type="PDBsum" id="7E6L"/>
<dbReference type="PDBsum" id="7E6M"/>
<dbReference type="PDBsum" id="7E6N"/>
<dbReference type="PDBsum" id="7E6R"/>
<dbReference type="PDBsum" id="7EO7"/>
<dbReference type="SMR" id="P0C6U6"/>
<dbReference type="BindingDB" id="P0C6U6"/>
<dbReference type="ChEMBL" id="CHEMBL3232683"/>
<dbReference type="SABIO-RK" id="P0C6U6"/>
<dbReference type="EvolutionaryTrace" id="P0C6U6"/>
<dbReference type="Proteomes" id="UP000008573">
    <property type="component" value="Genome"/>
</dbReference>
<dbReference type="GO" id="GO:0033644">
    <property type="term" value="C:host cell membrane"/>
    <property type="evidence" value="ECO:0007669"/>
    <property type="project" value="UniProtKB-SubCell"/>
</dbReference>
<dbReference type="GO" id="GO:0044220">
    <property type="term" value="C:host cell perinuclear region of cytoplasm"/>
    <property type="evidence" value="ECO:0007669"/>
    <property type="project" value="UniProtKB-SubCell"/>
</dbReference>
<dbReference type="GO" id="GO:0016020">
    <property type="term" value="C:membrane"/>
    <property type="evidence" value="ECO:0007669"/>
    <property type="project" value="UniProtKB-KW"/>
</dbReference>
<dbReference type="GO" id="GO:0004843">
    <property type="term" value="F:cysteine-type deubiquitinase activity"/>
    <property type="evidence" value="ECO:0007669"/>
    <property type="project" value="UniProtKB-EC"/>
</dbReference>
<dbReference type="GO" id="GO:0004197">
    <property type="term" value="F:cysteine-type endopeptidase activity"/>
    <property type="evidence" value="ECO:0007669"/>
    <property type="project" value="InterPro"/>
</dbReference>
<dbReference type="GO" id="GO:0008242">
    <property type="term" value="F:omega peptidase activity"/>
    <property type="evidence" value="ECO:0007669"/>
    <property type="project" value="InterPro"/>
</dbReference>
<dbReference type="GO" id="GO:0003723">
    <property type="term" value="F:RNA binding"/>
    <property type="evidence" value="ECO:0007669"/>
    <property type="project" value="UniProtKB-KW"/>
</dbReference>
<dbReference type="GO" id="GO:0016740">
    <property type="term" value="F:transferase activity"/>
    <property type="evidence" value="ECO:0007669"/>
    <property type="project" value="InterPro"/>
</dbReference>
<dbReference type="GO" id="GO:0008270">
    <property type="term" value="F:zinc ion binding"/>
    <property type="evidence" value="ECO:0007669"/>
    <property type="project" value="UniProtKB-KW"/>
</dbReference>
<dbReference type="GO" id="GO:0006508">
    <property type="term" value="P:proteolysis"/>
    <property type="evidence" value="ECO:0007669"/>
    <property type="project" value="UniProtKB-KW"/>
</dbReference>
<dbReference type="GO" id="GO:0010506">
    <property type="term" value="P:regulation of autophagy"/>
    <property type="evidence" value="ECO:0007669"/>
    <property type="project" value="InterPro"/>
</dbReference>
<dbReference type="GO" id="GO:0039520">
    <property type="term" value="P:symbiont-mediated activation of host autophagy"/>
    <property type="evidence" value="ECO:0007669"/>
    <property type="project" value="UniProtKB-KW"/>
</dbReference>
<dbReference type="GO" id="GO:0039648">
    <property type="term" value="P:symbiont-mediated perturbation of host ubiquitin-like protein modification"/>
    <property type="evidence" value="ECO:0007669"/>
    <property type="project" value="UniProtKB-KW"/>
</dbReference>
<dbReference type="GO" id="GO:0039548">
    <property type="term" value="P:symbiont-mediated suppression of host cytoplasmic pattern recognition receptor signaling pathway via inhibition of IRF3 activity"/>
    <property type="evidence" value="ECO:0007669"/>
    <property type="project" value="UniProtKB-KW"/>
</dbReference>
<dbReference type="GO" id="GO:0019079">
    <property type="term" value="P:viral genome replication"/>
    <property type="evidence" value="ECO:0007669"/>
    <property type="project" value="InterPro"/>
</dbReference>
<dbReference type="GO" id="GO:0019082">
    <property type="term" value="P:viral protein processing"/>
    <property type="evidence" value="ECO:0007669"/>
    <property type="project" value="InterPro"/>
</dbReference>
<dbReference type="GO" id="GO:0075523">
    <property type="term" value="P:viral translational frameshifting"/>
    <property type="evidence" value="ECO:0007669"/>
    <property type="project" value="UniProtKB-KW"/>
</dbReference>
<dbReference type="CDD" id="cd21901">
    <property type="entry name" value="alpha_betaCoV_Nsp10"/>
    <property type="match status" value="1"/>
</dbReference>
<dbReference type="CDD" id="cd21558">
    <property type="entry name" value="alphaCoV-Nsp6"/>
    <property type="match status" value="1"/>
</dbReference>
<dbReference type="CDD" id="cd21514">
    <property type="entry name" value="alphaCoV_Nsp2_HCoV-229E-like"/>
    <property type="match status" value="1"/>
</dbReference>
<dbReference type="CDD" id="cd21665">
    <property type="entry name" value="alphaCoV_Nsp5_Mpro"/>
    <property type="match status" value="1"/>
</dbReference>
<dbReference type="CDD" id="cd21826">
    <property type="entry name" value="alphaCoV_Nsp7"/>
    <property type="match status" value="1"/>
</dbReference>
<dbReference type="CDD" id="cd21830">
    <property type="entry name" value="alphaCoV_Nsp8"/>
    <property type="match status" value="1"/>
</dbReference>
<dbReference type="CDD" id="cd21897">
    <property type="entry name" value="alphaCoV_Nsp9"/>
    <property type="match status" value="1"/>
</dbReference>
<dbReference type="CDD" id="cd21731">
    <property type="entry name" value="alphaCoV_PLPro"/>
    <property type="match status" value="1"/>
</dbReference>
<dbReference type="CDD" id="cd21473">
    <property type="entry name" value="cv_Nsp4_TM"/>
    <property type="match status" value="1"/>
</dbReference>
<dbReference type="CDD" id="cd21557">
    <property type="entry name" value="Macro_X_Nsp3-like"/>
    <property type="match status" value="1"/>
</dbReference>
<dbReference type="CDD" id="cd21875">
    <property type="entry name" value="PEDV-like_alphaCoV_Nsp1"/>
    <property type="match status" value="1"/>
</dbReference>
<dbReference type="CDD" id="cd21712">
    <property type="entry name" value="TM_Y_alphaCoV_Nsp3_C"/>
    <property type="match status" value="1"/>
</dbReference>
<dbReference type="Gene3D" id="1.10.8.1190">
    <property type="match status" value="2"/>
</dbReference>
<dbReference type="Gene3D" id="6.10.140.2090">
    <property type="match status" value="1"/>
</dbReference>
<dbReference type="Gene3D" id="1.10.150.420">
    <property type="entry name" value="Coronavirus nonstructural protein 4 C-terminus"/>
    <property type="match status" value="1"/>
</dbReference>
<dbReference type="Gene3D" id="3.40.220.10">
    <property type="entry name" value="Leucine Aminopeptidase, subunit E, domain 1"/>
    <property type="match status" value="1"/>
</dbReference>
<dbReference type="Gene3D" id="1.10.1840.10">
    <property type="entry name" value="main proteinase (3clpro) structure, domain 3"/>
    <property type="match status" value="1"/>
</dbReference>
<dbReference type="Gene3D" id="1.10.8.370">
    <property type="entry name" value="nsp7 replicase"/>
    <property type="match status" value="1"/>
</dbReference>
<dbReference type="Gene3D" id="3.30.70.3540">
    <property type="entry name" value="Nsp8 replicase, head domain"/>
    <property type="match status" value="1"/>
</dbReference>
<dbReference type="Gene3D" id="2.40.10.250">
    <property type="entry name" value="Replicase NSP9"/>
    <property type="match status" value="1"/>
</dbReference>
<dbReference type="Gene3D" id="2.40.10.10">
    <property type="entry name" value="Trypsin-like serine proteases"/>
    <property type="match status" value="2"/>
</dbReference>
<dbReference type="InterPro" id="IPR046443">
    <property type="entry name" value="a/bCoV_NSP1_glob"/>
</dbReference>
<dbReference type="InterPro" id="IPR043613">
    <property type="entry name" value="CoV_NSP2_C"/>
</dbReference>
<dbReference type="InterPro" id="IPR047573">
    <property type="entry name" value="CoV_NSP2_M"/>
</dbReference>
<dbReference type="InterPro" id="IPR049894">
    <property type="entry name" value="COV_NSP3_3ECTO"/>
</dbReference>
<dbReference type="InterPro" id="IPR043611">
    <property type="entry name" value="CoV_NSP3_C"/>
</dbReference>
<dbReference type="InterPro" id="IPR047566">
    <property type="entry name" value="CoV_NSP3_Y"/>
</dbReference>
<dbReference type="InterPro" id="IPR032505">
    <property type="entry name" value="CoV_NSP4_C"/>
</dbReference>
<dbReference type="InterPro" id="IPR043612">
    <property type="entry name" value="CoV_NSP4_N"/>
</dbReference>
<dbReference type="InterPro" id="IPR002589">
    <property type="entry name" value="Macro_dom"/>
</dbReference>
<dbReference type="InterPro" id="IPR043472">
    <property type="entry name" value="Macro_dom-like"/>
</dbReference>
<dbReference type="InterPro" id="IPR044371">
    <property type="entry name" value="Macro_X_NSP3-like"/>
</dbReference>
<dbReference type="InterPro" id="IPR036333">
    <property type="entry name" value="NSP10_sf_CoV"/>
</dbReference>
<dbReference type="InterPro" id="IPR044385">
    <property type="entry name" value="NSP2_HCoV-229E-like"/>
</dbReference>
<dbReference type="InterPro" id="IPR043615">
    <property type="entry name" value="NSP2_N_CoV"/>
</dbReference>
<dbReference type="InterPro" id="IPR044357">
    <property type="entry name" value="NSP3_Ubl1_dom_CoV"/>
</dbReference>
<dbReference type="InterPro" id="IPR044353">
    <property type="entry name" value="Nsp3_Ubl2_dom_CoV"/>
</dbReference>
<dbReference type="InterPro" id="IPR038123">
    <property type="entry name" value="NSP4_C_sf_CoV"/>
</dbReference>
<dbReference type="InterPro" id="IPR044309">
    <property type="entry name" value="NSP5_Mpro_alphaCoV"/>
</dbReference>
<dbReference type="InterPro" id="IPR044369">
    <property type="entry name" value="NSP6_alphaCoV"/>
</dbReference>
<dbReference type="InterPro" id="IPR043610">
    <property type="entry name" value="NSP6_CoV"/>
</dbReference>
<dbReference type="InterPro" id="IPR014828">
    <property type="entry name" value="NSP7_CoV"/>
</dbReference>
<dbReference type="InterPro" id="IPR037204">
    <property type="entry name" value="NSP7_sf_CoV"/>
</dbReference>
<dbReference type="InterPro" id="IPR014829">
    <property type="entry name" value="NSP8_CoV"/>
</dbReference>
<dbReference type="InterPro" id="IPR037230">
    <property type="entry name" value="NSP8_sf_CoV"/>
</dbReference>
<dbReference type="InterPro" id="IPR014822">
    <property type="entry name" value="NSP9_CoV"/>
</dbReference>
<dbReference type="InterPro" id="IPR036499">
    <property type="entry name" value="NSP9_sf_CoV"/>
</dbReference>
<dbReference type="InterPro" id="IPR011050">
    <property type="entry name" value="Pectin_lyase_fold/virulence"/>
</dbReference>
<dbReference type="InterPro" id="IPR013016">
    <property type="entry name" value="Peptidase_C16_CoV"/>
</dbReference>
<dbReference type="InterPro" id="IPR008740">
    <property type="entry name" value="Peptidase_C30_CoV"/>
</dbReference>
<dbReference type="InterPro" id="IPR043477">
    <property type="entry name" value="Peptidase_C30_dom3_CoV"/>
</dbReference>
<dbReference type="InterPro" id="IPR009003">
    <property type="entry name" value="Peptidase_S1_PA"/>
</dbReference>
<dbReference type="InterPro" id="IPR043504">
    <property type="entry name" value="Peptidase_S1_PA_chymotrypsin"/>
</dbReference>
<dbReference type="InterPro" id="IPR043178">
    <property type="entry name" value="PLpro_thumb_sf_CoV"/>
</dbReference>
<dbReference type="InterPro" id="IPR018995">
    <property type="entry name" value="RNA_synth_NSP10_CoV"/>
</dbReference>
<dbReference type="Pfam" id="PF09401">
    <property type="entry name" value="CoV_NSP10"/>
    <property type="match status" value="1"/>
</dbReference>
<dbReference type="Pfam" id="PF19212">
    <property type="entry name" value="CoV_NSP2_C"/>
    <property type="match status" value="2"/>
</dbReference>
<dbReference type="Pfam" id="PF19211">
    <property type="entry name" value="CoV_NSP2_N"/>
    <property type="match status" value="1"/>
</dbReference>
<dbReference type="Pfam" id="PF19218">
    <property type="entry name" value="CoV_NSP3_C"/>
    <property type="match status" value="1"/>
</dbReference>
<dbReference type="Pfam" id="PF16348">
    <property type="entry name" value="CoV_NSP4_C"/>
    <property type="match status" value="1"/>
</dbReference>
<dbReference type="Pfam" id="PF19217">
    <property type="entry name" value="CoV_NSP4_N"/>
    <property type="match status" value="1"/>
</dbReference>
<dbReference type="Pfam" id="PF19213">
    <property type="entry name" value="CoV_NSP6"/>
    <property type="match status" value="1"/>
</dbReference>
<dbReference type="Pfam" id="PF08716">
    <property type="entry name" value="CoV_NSP7"/>
    <property type="match status" value="1"/>
</dbReference>
<dbReference type="Pfam" id="PF08717">
    <property type="entry name" value="CoV_NSP8"/>
    <property type="match status" value="1"/>
</dbReference>
<dbReference type="Pfam" id="PF08710">
    <property type="entry name" value="CoV_NSP9"/>
    <property type="match status" value="1"/>
</dbReference>
<dbReference type="Pfam" id="PF08715">
    <property type="entry name" value="CoV_peptidase"/>
    <property type="match status" value="2"/>
</dbReference>
<dbReference type="Pfam" id="PF01661">
    <property type="entry name" value="Macro"/>
    <property type="match status" value="1"/>
</dbReference>
<dbReference type="Pfam" id="PF05409">
    <property type="entry name" value="Peptidase_C30"/>
    <property type="match status" value="1"/>
</dbReference>
<dbReference type="SMART" id="SM00506">
    <property type="entry name" value="A1pp"/>
    <property type="match status" value="1"/>
</dbReference>
<dbReference type="SUPFAM" id="SSF144246">
    <property type="entry name" value="Coronavirus NSP10-like"/>
    <property type="match status" value="1"/>
</dbReference>
<dbReference type="SUPFAM" id="SSF140367">
    <property type="entry name" value="Coronavirus NSP7-like"/>
    <property type="match status" value="1"/>
</dbReference>
<dbReference type="SUPFAM" id="SSF143076">
    <property type="entry name" value="Coronavirus NSP8-like"/>
    <property type="match status" value="1"/>
</dbReference>
<dbReference type="SUPFAM" id="SSF52949">
    <property type="entry name" value="Macro domain-like"/>
    <property type="match status" value="1"/>
</dbReference>
<dbReference type="SUPFAM" id="SSF51126">
    <property type="entry name" value="Pectin lyase-like"/>
    <property type="match status" value="1"/>
</dbReference>
<dbReference type="SUPFAM" id="SSF101816">
    <property type="entry name" value="Replicase NSP9"/>
    <property type="match status" value="1"/>
</dbReference>
<dbReference type="SUPFAM" id="SSF50494">
    <property type="entry name" value="Trypsin-like serine proteases"/>
    <property type="match status" value="1"/>
</dbReference>
<dbReference type="PROSITE" id="PS51993">
    <property type="entry name" value="COV_3ECTO"/>
    <property type="match status" value="1"/>
</dbReference>
<dbReference type="PROSITE" id="PS51952">
    <property type="entry name" value="COV_EXON_MTASE_COACT"/>
    <property type="match status" value="1"/>
</dbReference>
<dbReference type="PROSITE" id="PS51962">
    <property type="entry name" value="COV_NSP1"/>
    <property type="match status" value="1"/>
</dbReference>
<dbReference type="PROSITE" id="PS51991">
    <property type="entry name" value="COV_NSP2_C"/>
    <property type="match status" value="1"/>
</dbReference>
<dbReference type="PROSITE" id="PS51990">
    <property type="entry name" value="COV_NSP2_M"/>
    <property type="match status" value="1"/>
</dbReference>
<dbReference type="PROSITE" id="PS51989">
    <property type="entry name" value="COV_NSP2_N"/>
    <property type="match status" value="1"/>
</dbReference>
<dbReference type="PROSITE" id="PS51992">
    <property type="entry name" value="COV_NSP3_Y"/>
    <property type="match status" value="1"/>
</dbReference>
<dbReference type="PROSITE" id="PS51943">
    <property type="entry name" value="COV_NSP3A_UBL"/>
    <property type="match status" value="1"/>
</dbReference>
<dbReference type="PROSITE" id="PS51944">
    <property type="entry name" value="COV_NSP3D_UBL"/>
    <property type="match status" value="1"/>
</dbReference>
<dbReference type="PROSITE" id="PS51946">
    <property type="entry name" value="COV_NSP4C"/>
    <property type="match status" value="1"/>
</dbReference>
<dbReference type="PROSITE" id="PS51949">
    <property type="entry name" value="COV_NSP7"/>
    <property type="match status" value="1"/>
</dbReference>
<dbReference type="PROSITE" id="PS51950">
    <property type="entry name" value="COV_NSP8"/>
    <property type="match status" value="1"/>
</dbReference>
<dbReference type="PROSITE" id="PS51951">
    <property type="entry name" value="COV_NSP9_SSRNA_BD"/>
    <property type="match status" value="1"/>
</dbReference>
<dbReference type="PROSITE" id="PS51442">
    <property type="entry name" value="M_PRO"/>
    <property type="match status" value="1"/>
</dbReference>
<dbReference type="PROSITE" id="PS51154">
    <property type="entry name" value="MACRO"/>
    <property type="match status" value="1"/>
</dbReference>
<dbReference type="PROSITE" id="PS51124">
    <property type="entry name" value="PEPTIDASE_C16"/>
    <property type="match status" value="2"/>
</dbReference>
<comment type="function">
    <text evidence="18">The papain-like proteinase 1 (PLP1) and papain-like proteinase 2 (PLP2) are responsible for the cleavages located at the N-terminus of the replicase polyprotein. In addition, PLP2 possesses a deubiquitinating/deISGylating activity and processes both 'Lys-48'- and 'Lys-63'-linked polyubiquitin chains from cellular substrates. PLP2 also antagonizes innate immune induction of type I interferon by blocking the nuclear translocation of host IRF-3.</text>
</comment>
<comment type="function">
    <molecule>3C-like proteinase</molecule>
    <text evidence="6">Responsible for the majority of cleavages as it cleaves the C-terminus of replicase polyprotein at 11 sites. Recognizes substrates containing the core sequence [ILMVF]-Q-|-[SGACN]. Inhibited by the substrate-analog Cbz-Val-Asn-Ser-Thr-Leu-Gln-CMK. Also contains an ADP-ribose-1''-phosphate (ADRP)-binding function (By similarity).</text>
</comment>
<comment type="function">
    <text evidence="1">Nsp7-nsp8 hexadecamer may possibly confer processivity to the polymerase, maybe by binding to dsRNA or by producing primers utilized by the latter.</text>
</comment>
<comment type="function">
    <text evidence="1">Nsp9 is a ssRNA-binding protein.</text>
</comment>
<comment type="catalytic activity">
    <reaction>
        <text>Thiol-dependent hydrolysis of ester, thioester, amide, peptide and isopeptide bonds formed by the C-terminal Gly of ubiquitin (a 76-residue protein attached to proteins as an intracellular targeting signal).</text>
        <dbReference type="EC" id="3.4.19.12"/>
    </reaction>
</comment>
<comment type="subunit">
    <text evidence="1">3CL-PRO exists as monomer and homodimer. Eight copies of nsp7 and eight copies of nsp8 assemble to form a heterohexadecamer. Nsp9 is a dimer. Nsp10 forms a dodecamer (By similarity).</text>
</comment>
<comment type="subcellular location">
    <molecule>Non-structural protein 3</molecule>
    <subcellularLocation>
        <location evidence="19">Host membrane</location>
        <topology evidence="19">Multi-pass membrane protein</topology>
    </subcellularLocation>
</comment>
<comment type="subcellular location">
    <molecule>Non-structural protein 4</molecule>
    <subcellularLocation>
        <location evidence="19">Host membrane</location>
        <topology evidence="19">Multi-pass membrane protein</topology>
    </subcellularLocation>
</comment>
<comment type="subcellular location">
    <molecule>Non-structural protein 6</molecule>
    <subcellularLocation>
        <location evidence="19">Host membrane</location>
        <topology evidence="19">Multi-pass membrane protein</topology>
    </subcellularLocation>
</comment>
<comment type="subcellular location">
    <molecule>Non-structural protein 7</molecule>
    <subcellularLocation>
        <location evidence="1">Host cytoplasm</location>
        <location evidence="1">Host perinuclear region</location>
    </subcellularLocation>
    <text evidence="1">nsp7, nsp8, nsp9 and nsp10 are localized in cytoplasmic foci, largely perinuclear. Late in infection, they merge into confluent complexes (By similarity).</text>
</comment>
<comment type="subcellular location">
    <molecule>Non-structural protein 8</molecule>
    <subcellularLocation>
        <location evidence="1">Host cytoplasm</location>
        <location evidence="1">Host perinuclear region</location>
    </subcellularLocation>
    <text evidence="1">nsp7, nsp8, nsp9 and nsp10 are localized in cytoplasmic foci, largely perinuclear. Late in infection, they merge into confluent complexes (By similarity).</text>
</comment>
<comment type="subcellular location">
    <molecule>Non-structural protein 9</molecule>
    <subcellularLocation>
        <location evidence="1">Host cytoplasm</location>
        <location evidence="1">Host perinuclear region</location>
    </subcellularLocation>
    <text evidence="1">nsp7, nsp8, nsp9 and nsp10 are localized in cytoplasmic foci, largely perinuclear. Late in infection, they merge into confluent complexes (By similarity).</text>
</comment>
<comment type="subcellular location">
    <molecule>Non-structural protein 10</molecule>
    <subcellularLocation>
        <location evidence="1">Host cytoplasm</location>
        <location evidence="1">Host perinuclear region</location>
    </subcellularLocation>
    <text evidence="1">nsp7, nsp8, nsp9 and nsp10 are localized in cytoplasmic foci, largely perinuclear. Late in infection, they merge into confluent complexes (By similarity).</text>
</comment>
<comment type="alternative products">
    <event type="ribosomal frameshifting"/>
    <isoform>
        <id>P0C6U6-1</id>
        <name>Replicase polyprotein 1a</name>
        <name>pp1a</name>
        <name>ORF1a polyprotein</name>
        <sequence type="displayed"/>
    </isoform>
    <isoform>
        <id>P0C6X5-1</id>
        <name>Replicase polyprotein 1ab</name>
        <name>pp1ab</name>
        <sequence type="external"/>
    </isoform>
</comment>
<comment type="domain">
    <text>The hydrophobic domains (HD) could mediate the membrane association of the replication complex and thereby alter the architecture of the host cell membrane.</text>
</comment>
<comment type="PTM">
    <text>Specific enzymatic cleavages in vivo by its own proteases yield mature proteins. 3CL-PRO and PL-PRO proteinases are autocatalytically processed.</text>
</comment>
<comment type="miscellaneous">
    <molecule>Isoform Replicase polyprotein 1a</molecule>
    <text>Produced by conventional translation.</text>
</comment>
<comment type="similarity">
    <text evidence="19">Belongs to the coronaviruses polyprotein 1ab family.</text>
</comment>
<accession>P0C6U6</accession>
<accession>Q6Q1S3</accession>
<feature type="chain" id="PRO_0000338230" description="Replicase polyprotein 1a">
    <location>
        <begin position="1"/>
        <end position="4060"/>
    </location>
</feature>
<feature type="chain" id="PRO_0000338231" description="Non-structural protein 1" evidence="1">
    <location>
        <begin position="1"/>
        <end position="110"/>
    </location>
</feature>
<feature type="chain" id="PRO_0000338232" description="Non-structural protein 2" evidence="1">
    <location>
        <begin position="111"/>
        <end position="898"/>
    </location>
</feature>
<feature type="chain" id="PRO_0000338233" description="Non-structural protein 3" evidence="1">
    <location>
        <begin position="899"/>
        <end position="2462"/>
    </location>
</feature>
<feature type="chain" id="PRO_0000338234" description="Non-structural protein 4" evidence="1">
    <location>
        <begin position="2463"/>
        <end position="2939"/>
    </location>
</feature>
<feature type="chain" id="PRO_0000338235" description="3C-like proteinase" evidence="1">
    <location>
        <begin position="2940"/>
        <end position="3242"/>
    </location>
</feature>
<feature type="chain" id="PRO_0000338236" description="Non-structural protein 6" evidence="1">
    <location>
        <begin position="3243"/>
        <end position="3521"/>
    </location>
</feature>
<feature type="chain" id="PRO_0000338237" description="Non-structural protein 7" evidence="1">
    <location>
        <begin position="3522"/>
        <end position="3604"/>
    </location>
</feature>
<feature type="chain" id="PRO_0000338238" description="Non-structural protein 8" evidence="1">
    <location>
        <begin position="3605"/>
        <end position="3799"/>
    </location>
</feature>
<feature type="chain" id="PRO_0000338239" description="Non-structural protein 9" evidence="1">
    <location>
        <begin position="3800"/>
        <end position="3908"/>
    </location>
</feature>
<feature type="chain" id="PRO_0000338240" description="Non-structural protein 10" evidence="1">
    <location>
        <begin position="3909"/>
        <end position="4043"/>
    </location>
</feature>
<feature type="chain" id="PRO_0000338241" description="Non-structural protein 11" evidence="2">
    <location>
        <begin position="4044"/>
        <end position="4060"/>
    </location>
</feature>
<feature type="transmembrane region" description="Helical" evidence="2">
    <location>
        <begin position="1903"/>
        <end position="1923"/>
    </location>
</feature>
<feature type="transmembrane region" description="Helical" evidence="2">
    <location>
        <begin position="1968"/>
        <end position="1988"/>
    </location>
</feature>
<feature type="transmembrane region" description="Helical" evidence="2">
    <location>
        <begin position="2050"/>
        <end position="2070"/>
    </location>
</feature>
<feature type="transmembrane region" description="Helical" evidence="2">
    <location>
        <begin position="2073"/>
        <end position="2093"/>
    </location>
</feature>
<feature type="transmembrane region" description="Helical" evidence="2">
    <location>
        <begin position="2111"/>
        <end position="2131"/>
    </location>
</feature>
<feature type="transmembrane region" description="Helical" evidence="2">
    <location>
        <begin position="2468"/>
        <end position="2488"/>
    </location>
</feature>
<feature type="transmembrane region" description="Helical" evidence="2">
    <location>
        <begin position="2727"/>
        <end position="2747"/>
    </location>
</feature>
<feature type="transmembrane region" description="Helical" evidence="2">
    <location>
        <begin position="2752"/>
        <end position="2769"/>
    </location>
</feature>
<feature type="transmembrane region" description="Helical" evidence="2">
    <location>
        <begin position="2772"/>
        <end position="2792"/>
    </location>
</feature>
<feature type="transmembrane region" description="Helical" evidence="2">
    <location>
        <begin position="2800"/>
        <end position="2820"/>
    </location>
</feature>
<feature type="transmembrane region" description="Helical" evidence="2">
    <location>
        <begin position="3254"/>
        <end position="3274"/>
    </location>
</feature>
<feature type="transmembrane region" description="Helical" evidence="2">
    <location>
        <begin position="3279"/>
        <end position="3299"/>
    </location>
</feature>
<feature type="transmembrane region" description="Helical" evidence="2">
    <location>
        <begin position="3303"/>
        <end position="3323"/>
    </location>
</feature>
<feature type="transmembrane region" description="Helical" evidence="2">
    <location>
        <begin position="3342"/>
        <end position="3362"/>
    </location>
</feature>
<feature type="transmembrane region" description="Helical" evidence="2">
    <location>
        <begin position="3376"/>
        <end position="3396"/>
    </location>
</feature>
<feature type="transmembrane region" description="Helical" evidence="2">
    <location>
        <begin position="3397"/>
        <end position="3417"/>
    </location>
</feature>
<feature type="transmembrane region" description="Helical" evidence="2">
    <location>
        <begin position="3442"/>
        <end position="3462"/>
    </location>
</feature>
<feature type="domain" description="CoV Nsp1 globular" evidence="12">
    <location>
        <begin position="2"/>
        <end position="109"/>
    </location>
</feature>
<feature type="domain" description="CoV Nsp2 N-terminal" evidence="13">
    <location>
        <begin position="112"/>
        <end position="358"/>
    </location>
</feature>
<feature type="domain" description="CoV Nsp2 middle" evidence="14">
    <location>
        <begin position="388"/>
        <end position="778"/>
    </location>
</feature>
<feature type="domain" description="CoV Nsp2 C-terminal" evidence="15">
    <location>
        <begin position="776"/>
        <end position="898"/>
    </location>
</feature>
<feature type="domain" description="Ubiquitin-like 1" evidence="3">
    <location>
        <begin position="899"/>
        <end position="994"/>
    </location>
</feature>
<feature type="domain" description="Peptidase C16 1" evidence="4">
    <location>
        <begin position="1021"/>
        <end position="1262"/>
    </location>
</feature>
<feature type="domain" description="Macro" evidence="5">
    <location>
        <begin position="1263"/>
        <end position="1421"/>
    </location>
</feature>
<feature type="domain" description="Ubiquitin-like 2" evidence="3">
    <location>
        <begin position="1579"/>
        <end position="1633"/>
    </location>
</feature>
<feature type="domain" description="Peptidase C16 2" evidence="4">
    <location>
        <begin position="1640"/>
        <end position="1886"/>
    </location>
</feature>
<feature type="domain" description="3Ecto" evidence="17">
    <location>
        <begin position="1983"/>
        <end position="2048"/>
    </location>
</feature>
<feature type="domain" description="CoV Nsp3 Y" evidence="16">
    <location>
        <begin position="2122"/>
        <end position="2461"/>
    </location>
</feature>
<feature type="domain" description="Nsp4C" evidence="7">
    <location>
        <begin position="2844"/>
        <end position="2939"/>
    </location>
</feature>
<feature type="domain" description="Peptidase C30" evidence="6">
    <location>
        <begin position="2940"/>
        <end position="3242"/>
    </location>
</feature>
<feature type="domain" description="RdRp Nsp7 cofactor" evidence="8">
    <location>
        <begin position="3522"/>
        <end position="3604"/>
    </location>
</feature>
<feature type="domain" description="RdRp Nsp8 cofactor" evidence="9">
    <location>
        <begin position="3605"/>
        <end position="3799"/>
    </location>
</feature>
<feature type="domain" description="Nsp9 ssRNA-binding" evidence="10">
    <location>
        <begin position="3800"/>
        <end position="3908"/>
    </location>
</feature>
<feature type="domain" description="ExoN/MTase coactivator" evidence="11">
    <location>
        <begin position="3909"/>
        <end position="4047"/>
    </location>
</feature>
<feature type="zinc finger region" description="C4-type 1" evidence="4">
    <location>
        <begin position="1134"/>
        <end position="1165"/>
    </location>
</feature>
<feature type="zinc finger region" description="C4-type 2; atypical" evidence="4">
    <location>
        <begin position="1757"/>
        <end position="1788"/>
    </location>
</feature>
<feature type="zinc finger region" evidence="1">
    <location>
        <begin position="3982"/>
        <end position="3998"/>
    </location>
</feature>
<feature type="zinc finger region" evidence="1">
    <location>
        <begin position="4024"/>
        <end position="4037"/>
    </location>
</feature>
<feature type="region of interest" description="C4" evidence="13">
    <location>
        <begin position="245"/>
        <end position="265"/>
    </location>
</feature>
<feature type="region of interest" description="HD1" evidence="1">
    <location>
        <begin position="1903"/>
        <end position="2131"/>
    </location>
</feature>
<feature type="region of interest" description="Y1" evidence="16">
    <location>
        <begin position="2122"/>
        <end position="2212"/>
    </location>
</feature>
<feature type="region of interest" description="ZF1" evidence="16">
    <location>
        <begin position="2126"/>
        <end position="2139"/>
    </location>
</feature>
<feature type="region of interest" description="ZF2" evidence="16">
    <location>
        <begin position="2172"/>
        <end position="2182"/>
    </location>
</feature>
<feature type="region of interest" description="CoV-Y" evidence="16">
    <location>
        <begin position="2213"/>
        <end position="2461"/>
    </location>
</feature>
<feature type="region of interest" description="Y2" evidence="16">
    <location>
        <begin position="2213"/>
        <end position="2302"/>
    </location>
</feature>
<feature type="region of interest" description="Y3" evidence="16">
    <location>
        <begin position="2303"/>
        <end position="2359"/>
    </location>
</feature>
<feature type="region of interest" description="Y4" evidence="16">
    <location>
        <begin position="2360"/>
        <end position="2461"/>
    </location>
</feature>
<feature type="region of interest" description="HD2" evidence="1">
    <location>
        <begin position="2468"/>
        <end position="2820"/>
    </location>
</feature>
<feature type="region of interest" description="HD3" evidence="1">
    <location>
        <begin position="3254"/>
        <end position="3462"/>
    </location>
</feature>
<feature type="active site" description="For PL1-PRO activity" evidence="4">
    <location>
        <position position="1062"/>
    </location>
</feature>
<feature type="active site" description="For PL1-PRO activity" evidence="4">
    <location>
        <position position="1212"/>
    </location>
</feature>
<feature type="active site" description="For PL1-PRO activity" evidence="4">
    <location>
        <position position="1225"/>
    </location>
</feature>
<feature type="active site" description="For PL2-PRO activity" evidence="4">
    <location>
        <position position="1678"/>
    </location>
</feature>
<feature type="active site" description="For PL2-PRO activity" evidence="4">
    <location>
        <position position="1836"/>
    </location>
</feature>
<feature type="active site" description="For PL2-PRO activity" evidence="4">
    <location>
        <position position="1841"/>
    </location>
</feature>
<feature type="active site" description="For 3CL-PRO activity" evidence="6">
    <location>
        <position position="2980"/>
    </location>
</feature>
<feature type="active site" description="For 3CL-PRO activity" evidence="6">
    <location>
        <position position="3083"/>
    </location>
</feature>
<feature type="binding site" evidence="13">
    <location>
        <position position="245"/>
    </location>
    <ligand>
        <name>Zn(2+)</name>
        <dbReference type="ChEBI" id="CHEBI:29105"/>
        <label>1</label>
    </ligand>
</feature>
<feature type="binding site" evidence="13">
    <location>
        <position position="247"/>
    </location>
    <ligand>
        <name>Zn(2+)</name>
        <dbReference type="ChEBI" id="CHEBI:29105"/>
        <label>1</label>
    </ligand>
</feature>
<feature type="binding site" evidence="13">
    <location>
        <position position="264"/>
    </location>
    <ligand>
        <name>Zn(2+)</name>
        <dbReference type="ChEBI" id="CHEBI:29105"/>
        <label>1</label>
    </ligand>
</feature>
<feature type="binding site" evidence="13">
    <location>
        <position position="265"/>
    </location>
    <ligand>
        <name>Zn(2+)</name>
        <dbReference type="ChEBI" id="CHEBI:29105"/>
        <label>1</label>
    </ligand>
</feature>
<feature type="binding site" evidence="4">
    <location>
        <position position="1134"/>
    </location>
    <ligand>
        <name>Zn(2+)</name>
        <dbReference type="ChEBI" id="CHEBI:29105"/>
        <label>2</label>
    </ligand>
</feature>
<feature type="binding site" evidence="4">
    <location>
        <position position="1136"/>
    </location>
    <ligand>
        <name>Zn(2+)</name>
        <dbReference type="ChEBI" id="CHEBI:29105"/>
        <label>2</label>
    </ligand>
</feature>
<feature type="binding site" evidence="4">
    <location>
        <position position="1163"/>
    </location>
    <ligand>
        <name>Zn(2+)</name>
        <dbReference type="ChEBI" id="CHEBI:29105"/>
        <label>2</label>
    </ligand>
</feature>
<feature type="binding site" evidence="4">
    <location>
        <position position="1165"/>
    </location>
    <ligand>
        <name>Zn(2+)</name>
        <dbReference type="ChEBI" id="CHEBI:29105"/>
        <label>2</label>
    </ligand>
</feature>
<feature type="binding site" evidence="4">
    <location>
        <position position="1757"/>
    </location>
    <ligand>
        <name>Zn(2+)</name>
        <dbReference type="ChEBI" id="CHEBI:29105"/>
        <label>3</label>
    </ligand>
</feature>
<feature type="binding site" evidence="4">
    <location>
        <position position="1760"/>
    </location>
    <ligand>
        <name>Zn(2+)</name>
        <dbReference type="ChEBI" id="CHEBI:29105"/>
        <label>3</label>
    </ligand>
</feature>
<feature type="binding site" evidence="4">
    <location>
        <position position="1786"/>
    </location>
    <ligand>
        <name>Zn(2+)</name>
        <dbReference type="ChEBI" id="CHEBI:29105"/>
        <label>3</label>
    </ligand>
</feature>
<feature type="binding site" evidence="4">
    <location>
        <position position="1788"/>
    </location>
    <ligand>
        <name>Zn(2+)</name>
        <dbReference type="ChEBI" id="CHEBI:29105"/>
        <label>3</label>
    </ligand>
</feature>
<feature type="binding site" evidence="16">
    <location>
        <position position="2126"/>
    </location>
    <ligand>
        <name>Zn(2+)</name>
        <dbReference type="ChEBI" id="CHEBI:29105"/>
        <label>4</label>
    </ligand>
</feature>
<feature type="binding site" evidence="16">
    <location>
        <position position="2131"/>
    </location>
    <ligand>
        <name>Zn(2+)</name>
        <dbReference type="ChEBI" id="CHEBI:29105"/>
        <label>4</label>
    </ligand>
</feature>
<feature type="binding site" evidence="16">
    <location>
        <position position="2136"/>
    </location>
    <ligand>
        <name>Zn(2+)</name>
        <dbReference type="ChEBI" id="CHEBI:29105"/>
        <label>4</label>
    </ligand>
</feature>
<feature type="binding site" evidence="16">
    <location>
        <position position="2139"/>
    </location>
    <ligand>
        <name>Zn(2+)</name>
        <dbReference type="ChEBI" id="CHEBI:29105"/>
        <label>4</label>
    </ligand>
</feature>
<feature type="binding site" evidence="16">
    <location>
        <position position="2172"/>
    </location>
    <ligand>
        <name>Zn(2+)</name>
        <dbReference type="ChEBI" id="CHEBI:29105"/>
        <label>5</label>
    </ligand>
</feature>
<feature type="binding site" evidence="16">
    <location>
        <position position="2175"/>
    </location>
    <ligand>
        <name>Zn(2+)</name>
        <dbReference type="ChEBI" id="CHEBI:29105"/>
        <label>5</label>
    </ligand>
</feature>
<feature type="binding site" evidence="16">
    <location>
        <position position="2179"/>
    </location>
    <ligand>
        <name>Zn(2+)</name>
        <dbReference type="ChEBI" id="CHEBI:29105"/>
        <label>5</label>
    </ligand>
</feature>
<feature type="binding site" evidence="16">
    <location>
        <position position="2182"/>
    </location>
    <ligand>
        <name>Zn(2+)</name>
        <dbReference type="ChEBI" id="CHEBI:29105"/>
        <label>5</label>
    </ligand>
</feature>
<feature type="binding site" evidence="11">
    <location>
        <position position="3982"/>
    </location>
    <ligand>
        <name>Zn(2+)</name>
        <dbReference type="ChEBI" id="CHEBI:29105"/>
        <label>6</label>
    </ligand>
</feature>
<feature type="binding site" evidence="11">
    <location>
        <position position="3985"/>
    </location>
    <ligand>
        <name>Zn(2+)</name>
        <dbReference type="ChEBI" id="CHEBI:29105"/>
        <label>6</label>
    </ligand>
</feature>
<feature type="binding site" evidence="11">
    <location>
        <position position="3991"/>
    </location>
    <ligand>
        <name>Zn(2+)</name>
        <dbReference type="ChEBI" id="CHEBI:29105"/>
        <label>6</label>
    </ligand>
</feature>
<feature type="binding site" evidence="11">
    <location>
        <position position="3998"/>
    </location>
    <ligand>
        <name>Zn(2+)</name>
        <dbReference type="ChEBI" id="CHEBI:29105"/>
        <label>6</label>
    </ligand>
</feature>
<feature type="binding site" evidence="11">
    <location>
        <position position="4024"/>
    </location>
    <ligand>
        <name>Zn(2+)</name>
        <dbReference type="ChEBI" id="CHEBI:29105"/>
        <label>7</label>
    </ligand>
</feature>
<feature type="binding site" evidence="11">
    <location>
        <position position="4027"/>
    </location>
    <ligand>
        <name>Zn(2+)</name>
        <dbReference type="ChEBI" id="CHEBI:29105"/>
        <label>7</label>
    </ligand>
</feature>
<feature type="binding site" evidence="11">
    <location>
        <position position="4035"/>
    </location>
    <ligand>
        <name>Zn(2+)</name>
        <dbReference type="ChEBI" id="CHEBI:29105"/>
        <label>7</label>
    </ligand>
</feature>
<feature type="binding site" evidence="11">
    <location>
        <position position="4037"/>
    </location>
    <ligand>
        <name>Zn(2+)</name>
        <dbReference type="ChEBI" id="CHEBI:29105"/>
        <label>7</label>
    </ligand>
</feature>
<feature type="site" description="Cleavage; by PL1-PRO" evidence="1">
    <location>
        <begin position="110"/>
        <end position="111"/>
    </location>
</feature>
<feature type="site" description="Cleavage; by PL1-PRO" evidence="1">
    <location>
        <begin position="898"/>
        <end position="899"/>
    </location>
</feature>
<feature type="site" description="Cleavage; by PL2-PRO" evidence="1">
    <location>
        <begin position="2462"/>
        <end position="2463"/>
    </location>
</feature>
<feature type="site" description="Cleavage; by 3CL-PRO" evidence="1">
    <location>
        <begin position="2939"/>
        <end position="2940"/>
    </location>
</feature>
<feature type="site" description="Cleavage; by 3CL-PRO" evidence="1">
    <location>
        <begin position="3242"/>
        <end position="3243"/>
    </location>
</feature>
<feature type="site" description="Cleavage; by 3CL-PRO" evidence="1">
    <location>
        <begin position="3521"/>
        <end position="3522"/>
    </location>
</feature>
<feature type="site" description="Cleavage; by 3CL-PRO" evidence="1">
    <location>
        <begin position="3604"/>
        <end position="3605"/>
    </location>
</feature>
<feature type="site" description="Cleavage; by 3CL-PRO" evidence="1">
    <location>
        <begin position="3799"/>
        <end position="3800"/>
    </location>
</feature>
<feature type="site" description="Cleavage; by 3CL-PRO" evidence="1">
    <location>
        <begin position="3908"/>
        <end position="3909"/>
    </location>
</feature>
<feature type="site" description="Cleavage; by 3CL-PRO" evidence="1">
    <location>
        <begin position="4043"/>
        <end position="4044"/>
    </location>
</feature>
<feature type="disulfide bond" evidence="17">
    <location>
        <begin position="1999"/>
        <end position="2026"/>
    </location>
</feature>
<feature type="disulfide bond" evidence="17">
    <location>
        <begin position="2017"/>
        <end position="2023"/>
    </location>
</feature>
<feature type="strand" evidence="20">
    <location>
        <begin position="1260"/>
        <end position="1263"/>
    </location>
</feature>
<feature type="strand" evidence="20">
    <location>
        <begin position="1266"/>
        <end position="1271"/>
    </location>
</feature>
<feature type="helix" evidence="20">
    <location>
        <begin position="1273"/>
        <end position="1276"/>
    </location>
</feature>
<feature type="turn" evidence="20">
    <location>
        <begin position="1277"/>
        <end position="1279"/>
    </location>
</feature>
<feature type="strand" evidence="20">
    <location>
        <begin position="1283"/>
        <end position="1289"/>
    </location>
</feature>
<feature type="helix" evidence="20">
    <location>
        <begin position="1298"/>
        <end position="1306"/>
    </location>
</feature>
<feature type="turn" evidence="20">
    <location>
        <begin position="1307"/>
        <end position="1309"/>
    </location>
</feature>
<feature type="helix" evidence="20">
    <location>
        <begin position="1310"/>
        <end position="1322"/>
    </location>
</feature>
<feature type="strand" evidence="20">
    <location>
        <begin position="1330"/>
        <end position="1334"/>
    </location>
</feature>
<feature type="strand" evidence="20">
    <location>
        <begin position="1339"/>
        <end position="1344"/>
    </location>
</feature>
<feature type="helix" evidence="20">
    <location>
        <begin position="1352"/>
        <end position="1365"/>
    </location>
</feature>
<feature type="strand" evidence="20">
    <location>
        <begin position="1366"/>
        <end position="1368"/>
    </location>
</feature>
<feature type="strand" evidence="20">
    <location>
        <begin position="1370"/>
        <end position="1373"/>
    </location>
</feature>
<feature type="helix" evidence="20">
    <location>
        <begin position="1378"/>
        <end position="1380"/>
    </location>
</feature>
<feature type="helix" evidence="20">
    <location>
        <begin position="1384"/>
        <end position="1392"/>
    </location>
</feature>
<feature type="strand" evidence="20">
    <location>
        <begin position="1400"/>
        <end position="1404"/>
    </location>
</feature>
<feature type="helix" evidence="20">
    <location>
        <begin position="1407"/>
        <end position="1418"/>
    </location>
</feature>
<feature type="helix" evidence="21">
    <location>
        <begin position="2950"/>
        <end position="2953"/>
    </location>
</feature>
<feature type="strand" evidence="21">
    <location>
        <begin position="2956"/>
        <end position="2961"/>
    </location>
</feature>
<feature type="strand" evidence="21">
    <location>
        <begin position="2964"/>
        <end position="2971"/>
    </location>
</feature>
<feature type="strand" evidence="21">
    <location>
        <begin position="2974"/>
        <end position="2978"/>
    </location>
</feature>
<feature type="helix" evidence="21">
    <location>
        <begin position="2979"/>
        <end position="2982"/>
    </location>
</feature>
<feature type="strand" evidence="22">
    <location>
        <begin position="2986"/>
        <end position="2988"/>
    </location>
</feature>
<feature type="helix" evidence="21">
    <location>
        <begin position="2992"/>
        <end position="2998"/>
    </location>
</feature>
<feature type="helix" evidence="21">
    <location>
        <begin position="3001"/>
        <end position="3003"/>
    </location>
</feature>
<feature type="strand" evidence="21">
    <location>
        <begin position="3004"/>
        <end position="3008"/>
    </location>
</feature>
<feature type="strand" evidence="21">
    <location>
        <begin position="3011"/>
        <end position="3013"/>
    </location>
</feature>
<feature type="strand" evidence="21">
    <location>
        <begin position="3015"/>
        <end position="3021"/>
    </location>
</feature>
<feature type="strand" evidence="21">
    <location>
        <begin position="3024"/>
        <end position="3031"/>
    </location>
</feature>
<feature type="strand" evidence="21">
    <location>
        <begin position="3038"/>
        <end position="3041"/>
    </location>
</feature>
<feature type="strand" evidence="21">
    <location>
        <begin position="3049"/>
        <end position="3056"/>
    </location>
</feature>
<feature type="strand" evidence="21">
    <location>
        <begin position="3059"/>
        <end position="3067"/>
    </location>
</feature>
<feature type="strand" evidence="21">
    <location>
        <begin position="3086"/>
        <end position="3090"/>
    </location>
</feature>
<feature type="strand" evidence="21">
    <location>
        <begin position="3096"/>
        <end position="3105"/>
    </location>
</feature>
<feature type="strand" evidence="21">
    <location>
        <begin position="3111"/>
        <end position="3114"/>
    </location>
</feature>
<feature type="helix" evidence="21">
    <location>
        <begin position="3121"/>
        <end position="3123"/>
    </location>
</feature>
<feature type="strand" evidence="21">
    <location>
        <begin position="3126"/>
        <end position="3128"/>
    </location>
</feature>
<feature type="helix" evidence="21">
    <location>
        <begin position="3140"/>
        <end position="3152"/>
    </location>
</feature>
<feature type="helix" evidence="21">
    <location>
        <begin position="3166"/>
        <end position="3175"/>
    </location>
</feature>
<feature type="helix" evidence="21">
    <location>
        <begin position="3185"/>
        <end position="3187"/>
    </location>
</feature>
<feature type="helix" evidence="21">
    <location>
        <begin position="3188"/>
        <end position="3194"/>
    </location>
</feature>
<feature type="helix" evidence="21">
    <location>
        <begin position="3198"/>
        <end position="3208"/>
    </location>
</feature>
<feature type="strand" evidence="21">
    <location>
        <begin position="3220"/>
        <end position="3222"/>
    </location>
</feature>
<feature type="helix" evidence="21">
    <location>
        <begin position="3229"/>
        <end position="3237"/>
    </location>
</feature>
<reference key="1">
    <citation type="journal article" date="2004" name="Nat. Med.">
        <title>Identification of a new human coronavirus.</title>
        <authorList>
            <person name="Van Der Hoek L."/>
            <person name="Pyrc K."/>
            <person name="Jebbink M.F."/>
            <person name="Vermeulen-Oost W."/>
            <person name="Berkhout R.J."/>
            <person name="Wolthers K.C."/>
            <person name="Wertheim-Van Dillen P.M."/>
            <person name="Kaandorp J."/>
            <person name="Spaargaren J."/>
            <person name="Berkhout B."/>
        </authorList>
    </citation>
    <scope>NUCLEOTIDE SEQUENCE [GENOMIC RNA]</scope>
    <source>
        <strain>Isolate Amsterdam I</strain>
    </source>
</reference>
<reference key="2">
    <citation type="journal article" date="2010" name="J. Virol.">
        <title>Deubiquitinating and interferon antagonism activities of coronavirus papain-like proteases.</title>
        <authorList>
            <person name="Clementz M.A."/>
            <person name="Chen Z."/>
            <person name="Banach B.S."/>
            <person name="Wang Y."/>
            <person name="Sun L."/>
            <person name="Ratia K."/>
            <person name="Baez-Santos Y.M."/>
            <person name="Wang J."/>
            <person name="Takayama J."/>
            <person name="Ghosh A.K."/>
            <person name="Li K."/>
            <person name="Mesecar A.D."/>
            <person name="Baker S.C."/>
        </authorList>
    </citation>
    <scope>FUNCTION</scope>
</reference>
<organism>
    <name type="scientific">Human coronavirus NL63</name>
    <name type="common">HCoV-NL63</name>
    <dbReference type="NCBI Taxonomy" id="277944"/>
    <lineage>
        <taxon>Viruses</taxon>
        <taxon>Riboviria</taxon>
        <taxon>Orthornavirae</taxon>
        <taxon>Pisuviricota</taxon>
        <taxon>Pisoniviricetes</taxon>
        <taxon>Nidovirales</taxon>
        <taxon>Cornidovirineae</taxon>
        <taxon>Coronaviridae</taxon>
        <taxon>Orthocoronavirinae</taxon>
        <taxon>Alphacoronavirus</taxon>
        <taxon>Setracovirus</taxon>
    </lineage>
</organism>
<proteinExistence type="evidence at protein level"/>
<gene>
    <name type="ORF">1a</name>
</gene>
<evidence type="ECO:0000250" key="1"/>
<evidence type="ECO:0000255" key="2"/>
<evidence type="ECO:0000255" key="3">
    <source>
        <dbReference type="PROSITE-ProRule" id="PRU00214"/>
    </source>
</evidence>
<evidence type="ECO:0000255" key="4">
    <source>
        <dbReference type="PROSITE-ProRule" id="PRU00444"/>
    </source>
</evidence>
<evidence type="ECO:0000255" key="5">
    <source>
        <dbReference type="PROSITE-ProRule" id="PRU00490"/>
    </source>
</evidence>
<evidence type="ECO:0000255" key="6">
    <source>
        <dbReference type="PROSITE-ProRule" id="PRU00772"/>
    </source>
</evidence>
<evidence type="ECO:0000255" key="7">
    <source>
        <dbReference type="PROSITE-ProRule" id="PRU01291"/>
    </source>
</evidence>
<evidence type="ECO:0000255" key="8">
    <source>
        <dbReference type="PROSITE-ProRule" id="PRU01294"/>
    </source>
</evidence>
<evidence type="ECO:0000255" key="9">
    <source>
        <dbReference type="PROSITE-ProRule" id="PRU01295"/>
    </source>
</evidence>
<evidence type="ECO:0000255" key="10">
    <source>
        <dbReference type="PROSITE-ProRule" id="PRU01296"/>
    </source>
</evidence>
<evidence type="ECO:0000255" key="11">
    <source>
        <dbReference type="PROSITE-ProRule" id="PRU01297"/>
    </source>
</evidence>
<evidence type="ECO:0000255" key="12">
    <source>
        <dbReference type="PROSITE-ProRule" id="PRU01307"/>
    </source>
</evidence>
<evidence type="ECO:0000255" key="13">
    <source>
        <dbReference type="PROSITE-ProRule" id="PRU01333"/>
    </source>
</evidence>
<evidence type="ECO:0000255" key="14">
    <source>
        <dbReference type="PROSITE-ProRule" id="PRU01334"/>
    </source>
</evidence>
<evidence type="ECO:0000255" key="15">
    <source>
        <dbReference type="PROSITE-ProRule" id="PRU01335"/>
    </source>
</evidence>
<evidence type="ECO:0000255" key="16">
    <source>
        <dbReference type="PROSITE-ProRule" id="PRU01336"/>
    </source>
</evidence>
<evidence type="ECO:0000255" key="17">
    <source>
        <dbReference type="PROSITE-ProRule" id="PRU01337"/>
    </source>
</evidence>
<evidence type="ECO:0000269" key="18">
    <source>
    </source>
</evidence>
<evidence type="ECO:0000305" key="19"/>
<evidence type="ECO:0007829" key="20">
    <source>
        <dbReference type="PDB" id="2VRI"/>
    </source>
</evidence>
<evidence type="ECO:0007829" key="21">
    <source>
        <dbReference type="PDB" id="3TLO"/>
    </source>
</evidence>
<evidence type="ECO:0007829" key="22">
    <source>
        <dbReference type="PDB" id="5GWY"/>
    </source>
</evidence>